<protein>
    <recommendedName>
        <fullName evidence="1">2,3,4,5-tetrahydropyridine-2,6-dicarboxylate N-succinyltransferase</fullName>
        <ecNumber evidence="1">2.3.1.117</ecNumber>
    </recommendedName>
    <alternativeName>
        <fullName evidence="1">Tetrahydrodipicolinate N-succinyltransferase</fullName>
        <shortName evidence="1">THDP succinyltransferase</shortName>
        <shortName evidence="1">THP succinyltransferase</shortName>
        <shortName evidence="1">Tetrahydropicolinate succinylase</shortName>
    </alternativeName>
</protein>
<feature type="chain" id="PRO_0000196924" description="2,3,4,5-tetrahydropyridine-2,6-dicarboxylate N-succinyltransferase">
    <location>
        <begin position="1"/>
        <end position="273"/>
    </location>
</feature>
<feature type="binding site" evidence="1">
    <location>
        <position position="104"/>
    </location>
    <ligand>
        <name>substrate</name>
    </ligand>
</feature>
<feature type="binding site" evidence="1">
    <location>
        <position position="141"/>
    </location>
    <ligand>
        <name>substrate</name>
    </ligand>
</feature>
<organism>
    <name type="scientific">Buchnera aphidicola subsp. Schizaphis graminum (strain Sg)</name>
    <dbReference type="NCBI Taxonomy" id="198804"/>
    <lineage>
        <taxon>Bacteria</taxon>
        <taxon>Pseudomonadati</taxon>
        <taxon>Pseudomonadota</taxon>
        <taxon>Gammaproteobacteria</taxon>
        <taxon>Enterobacterales</taxon>
        <taxon>Erwiniaceae</taxon>
        <taxon>Buchnera</taxon>
    </lineage>
</organism>
<sequence length="273" mass="30928">MKKYYDIIENAYLKKNEVNTKNIDIETKQTIHHVIELLNSGKIRVAEKKDNIWITNQWIKKSILLYMYLNQNNVFQGSFSNYYDKIPLKYENYNEKKFKEERIRVVPPATIRYGSFINSNTIIMPSYVNIGAYVDQGTMIDTWTTVGSCAQIGKNVHLSGGVGIGGVLEPLQNNPTIIEDNCFIGARSEIVEGVIIEEGSVISMGVFIGQSTKIYNRETGEILYGRVPANSVVVSGSLPSKDRKYNLYAAVIVKRVDSKTLNKVEINQLLRDK</sequence>
<accession>O85290</accession>
<evidence type="ECO:0000255" key="1">
    <source>
        <dbReference type="HAMAP-Rule" id="MF_00811"/>
    </source>
</evidence>
<dbReference type="EC" id="2.3.1.117" evidence="1"/>
<dbReference type="EMBL" id="AE013218">
    <property type="protein sequence ID" value="AAM67782.1"/>
    <property type="molecule type" value="Genomic_DNA"/>
</dbReference>
<dbReference type="EMBL" id="AF060492">
    <property type="protein sequence ID" value="AAC32330.1"/>
    <property type="molecule type" value="Genomic_DNA"/>
</dbReference>
<dbReference type="RefSeq" id="WP_011053749.1">
    <property type="nucleotide sequence ID" value="NC_004061.1"/>
</dbReference>
<dbReference type="SMR" id="O85290"/>
<dbReference type="STRING" id="198804.BUsg_223"/>
<dbReference type="GeneID" id="93003689"/>
<dbReference type="KEGG" id="bas:BUsg_223"/>
<dbReference type="eggNOG" id="COG2171">
    <property type="taxonomic scope" value="Bacteria"/>
</dbReference>
<dbReference type="HOGENOM" id="CLU_050859_0_1_6"/>
<dbReference type="UniPathway" id="UPA00034">
    <property type="reaction ID" value="UER00019"/>
</dbReference>
<dbReference type="Proteomes" id="UP000000416">
    <property type="component" value="Chromosome"/>
</dbReference>
<dbReference type="GO" id="GO:0005737">
    <property type="term" value="C:cytoplasm"/>
    <property type="evidence" value="ECO:0007669"/>
    <property type="project" value="UniProtKB-SubCell"/>
</dbReference>
<dbReference type="GO" id="GO:0008666">
    <property type="term" value="F:2,3,4,5-tetrahydropyridine-2,6-dicarboxylate N-succinyltransferase activity"/>
    <property type="evidence" value="ECO:0007669"/>
    <property type="project" value="UniProtKB-UniRule"/>
</dbReference>
<dbReference type="GO" id="GO:0016779">
    <property type="term" value="F:nucleotidyltransferase activity"/>
    <property type="evidence" value="ECO:0007669"/>
    <property type="project" value="TreeGrafter"/>
</dbReference>
<dbReference type="GO" id="GO:0019877">
    <property type="term" value="P:diaminopimelate biosynthetic process"/>
    <property type="evidence" value="ECO:0007669"/>
    <property type="project" value="UniProtKB-UniRule"/>
</dbReference>
<dbReference type="GO" id="GO:0009089">
    <property type="term" value="P:lysine biosynthetic process via diaminopimelate"/>
    <property type="evidence" value="ECO:0007669"/>
    <property type="project" value="UniProtKB-UniRule"/>
</dbReference>
<dbReference type="CDD" id="cd03350">
    <property type="entry name" value="LbH_THP_succinylT"/>
    <property type="match status" value="1"/>
</dbReference>
<dbReference type="Gene3D" id="2.160.10.10">
    <property type="entry name" value="Hexapeptide repeat proteins"/>
    <property type="match status" value="1"/>
</dbReference>
<dbReference type="Gene3D" id="1.10.166.10">
    <property type="entry name" value="Tetrahydrodipicolinate-N-succinyltransferase, N-terminal domain"/>
    <property type="match status" value="1"/>
</dbReference>
<dbReference type="HAMAP" id="MF_00811">
    <property type="entry name" value="DapD"/>
    <property type="match status" value="1"/>
</dbReference>
<dbReference type="InterPro" id="IPR005664">
    <property type="entry name" value="DapD_Trfase_Hexpep_rpt_fam"/>
</dbReference>
<dbReference type="InterPro" id="IPR001451">
    <property type="entry name" value="Hexapep"/>
</dbReference>
<dbReference type="InterPro" id="IPR023180">
    <property type="entry name" value="THP_succinylTrfase_dom1"/>
</dbReference>
<dbReference type="InterPro" id="IPR037133">
    <property type="entry name" value="THP_succinylTrfase_N_sf"/>
</dbReference>
<dbReference type="InterPro" id="IPR011004">
    <property type="entry name" value="Trimer_LpxA-like_sf"/>
</dbReference>
<dbReference type="NCBIfam" id="TIGR00965">
    <property type="entry name" value="dapD"/>
    <property type="match status" value="1"/>
</dbReference>
<dbReference type="NCBIfam" id="NF008808">
    <property type="entry name" value="PRK11830.1"/>
    <property type="match status" value="1"/>
</dbReference>
<dbReference type="PANTHER" id="PTHR19136:SF52">
    <property type="entry name" value="2,3,4,5-TETRAHYDROPYRIDINE-2,6-DICARBOXYLATE N-SUCCINYLTRANSFERASE"/>
    <property type="match status" value="1"/>
</dbReference>
<dbReference type="PANTHER" id="PTHR19136">
    <property type="entry name" value="MOLYBDENUM COFACTOR GUANYLYLTRANSFERASE"/>
    <property type="match status" value="1"/>
</dbReference>
<dbReference type="Pfam" id="PF14602">
    <property type="entry name" value="Hexapep_2"/>
    <property type="match status" value="1"/>
</dbReference>
<dbReference type="Pfam" id="PF14805">
    <property type="entry name" value="THDPS_N_2"/>
    <property type="match status" value="1"/>
</dbReference>
<dbReference type="SUPFAM" id="SSF51161">
    <property type="entry name" value="Trimeric LpxA-like enzymes"/>
    <property type="match status" value="1"/>
</dbReference>
<reference key="1">
    <citation type="journal article" date="2002" name="Science">
        <title>50 million years of genomic stasis in endosymbiotic bacteria.</title>
        <authorList>
            <person name="Tamas I."/>
            <person name="Klasson L."/>
            <person name="Canbaeck B."/>
            <person name="Naeslund A.K."/>
            <person name="Eriksson A.-S."/>
            <person name="Wernegreen J.J."/>
            <person name="Sandstroem J.P."/>
            <person name="Moran N.A."/>
            <person name="Andersson S.G.E."/>
        </authorList>
    </citation>
    <scope>NUCLEOTIDE SEQUENCE [LARGE SCALE GENOMIC DNA]</scope>
    <source>
        <strain>Sg</strain>
    </source>
</reference>
<reference key="2">
    <citation type="journal article" date="1998" name="Curr. Microbiol.">
        <title>Sequence analysis of a DNA fragment from Buchnera aphidicola (Aphid endosymbiont) containing the genes dapD-htrA-ilvI-ilvH-ftsL-ftsI-murE.</title>
        <authorList>
            <person name="Thao M.L."/>
            <person name="Baumann P."/>
        </authorList>
    </citation>
    <scope>NUCLEOTIDE SEQUENCE [GENOMIC DNA] OF 103-273</scope>
</reference>
<comment type="catalytic activity">
    <reaction evidence="1">
        <text>(S)-2,3,4,5-tetrahydrodipicolinate + succinyl-CoA + H2O = (S)-2-succinylamino-6-oxoheptanedioate + CoA</text>
        <dbReference type="Rhea" id="RHEA:17325"/>
        <dbReference type="ChEBI" id="CHEBI:15377"/>
        <dbReference type="ChEBI" id="CHEBI:15685"/>
        <dbReference type="ChEBI" id="CHEBI:16845"/>
        <dbReference type="ChEBI" id="CHEBI:57287"/>
        <dbReference type="ChEBI" id="CHEBI:57292"/>
        <dbReference type="EC" id="2.3.1.117"/>
    </reaction>
</comment>
<comment type="pathway">
    <text evidence="1">Amino-acid biosynthesis; L-lysine biosynthesis via DAP pathway; LL-2,6-diaminopimelate from (S)-tetrahydrodipicolinate (succinylase route): step 1/3.</text>
</comment>
<comment type="subunit">
    <text evidence="1">Homotrimer.</text>
</comment>
<comment type="subcellular location">
    <subcellularLocation>
        <location evidence="1">Cytoplasm</location>
    </subcellularLocation>
</comment>
<comment type="similarity">
    <text evidence="1">Belongs to the transferase hexapeptide repeat family.</text>
</comment>
<proteinExistence type="inferred from homology"/>
<keyword id="KW-0012">Acyltransferase</keyword>
<keyword id="KW-0028">Amino-acid biosynthesis</keyword>
<keyword id="KW-0963">Cytoplasm</keyword>
<keyword id="KW-0220">Diaminopimelate biosynthesis</keyword>
<keyword id="KW-0457">Lysine biosynthesis</keyword>
<keyword id="KW-0677">Repeat</keyword>
<keyword id="KW-0808">Transferase</keyword>
<gene>
    <name evidence="1" type="primary">dapD</name>
    <name type="ordered locus">BUsg_223</name>
</gene>
<name>DAPD_BUCAP</name>